<sequence>MAKEATRVRRRERKNIVSGVAHVNSTFNNTMITITDAQGNTISWSSAGMMGFKGSRKSTPYAAQMAAEDCARKAVEHGMRTLEVEVSGPGSGRESALRALQAAGFTVTSIRDVTPIPHNGCRPRKRRRV</sequence>
<proteinExistence type="inferred from homology"/>
<keyword id="KW-1185">Reference proteome</keyword>
<keyword id="KW-0687">Ribonucleoprotein</keyword>
<keyword id="KW-0689">Ribosomal protein</keyword>
<keyword id="KW-0694">RNA-binding</keyword>
<keyword id="KW-0699">rRNA-binding</keyword>
<reference key="1">
    <citation type="journal article" date="2010" name="J. Bacteriol.">
        <title>Complete genome sequence of Beijerinckia indica subsp. indica.</title>
        <authorList>
            <person name="Tamas I."/>
            <person name="Dedysh S.N."/>
            <person name="Liesack W."/>
            <person name="Stott M.B."/>
            <person name="Alam M."/>
            <person name="Murrell J.C."/>
            <person name="Dunfield P.F."/>
        </authorList>
    </citation>
    <scope>NUCLEOTIDE SEQUENCE [LARGE SCALE GENOMIC DNA]</scope>
    <source>
        <strain>ATCC 9039 / DSM 1715 / NCIMB 8712</strain>
    </source>
</reference>
<evidence type="ECO:0000255" key="1">
    <source>
        <dbReference type="HAMAP-Rule" id="MF_01310"/>
    </source>
</evidence>
<evidence type="ECO:0000305" key="2"/>
<comment type="function">
    <text evidence="1">Located on the platform of the 30S subunit, it bridges several disparate RNA helices of the 16S rRNA. Forms part of the Shine-Dalgarno cleft in the 70S ribosome.</text>
</comment>
<comment type="subunit">
    <text evidence="1">Part of the 30S ribosomal subunit. Interacts with proteins S7 and S18. Binds to IF-3.</text>
</comment>
<comment type="similarity">
    <text evidence="1">Belongs to the universal ribosomal protein uS11 family.</text>
</comment>
<dbReference type="EMBL" id="CP001016">
    <property type="protein sequence ID" value="ACB95659.1"/>
    <property type="molecule type" value="Genomic_DNA"/>
</dbReference>
<dbReference type="RefSeq" id="WP_012385015.1">
    <property type="nucleotide sequence ID" value="NC_010581.1"/>
</dbReference>
<dbReference type="SMR" id="B2IF94"/>
<dbReference type="STRING" id="395963.Bind_2037"/>
<dbReference type="KEGG" id="bid:Bind_2037"/>
<dbReference type="eggNOG" id="COG0100">
    <property type="taxonomic scope" value="Bacteria"/>
</dbReference>
<dbReference type="HOGENOM" id="CLU_072439_5_0_5"/>
<dbReference type="OrthoDB" id="9806415at2"/>
<dbReference type="Proteomes" id="UP000001695">
    <property type="component" value="Chromosome"/>
</dbReference>
<dbReference type="GO" id="GO:1990904">
    <property type="term" value="C:ribonucleoprotein complex"/>
    <property type="evidence" value="ECO:0007669"/>
    <property type="project" value="UniProtKB-KW"/>
</dbReference>
<dbReference type="GO" id="GO:0005840">
    <property type="term" value="C:ribosome"/>
    <property type="evidence" value="ECO:0007669"/>
    <property type="project" value="UniProtKB-KW"/>
</dbReference>
<dbReference type="GO" id="GO:0019843">
    <property type="term" value="F:rRNA binding"/>
    <property type="evidence" value="ECO:0007669"/>
    <property type="project" value="UniProtKB-UniRule"/>
</dbReference>
<dbReference type="GO" id="GO:0003735">
    <property type="term" value="F:structural constituent of ribosome"/>
    <property type="evidence" value="ECO:0007669"/>
    <property type="project" value="InterPro"/>
</dbReference>
<dbReference type="GO" id="GO:0006412">
    <property type="term" value="P:translation"/>
    <property type="evidence" value="ECO:0007669"/>
    <property type="project" value="UniProtKB-UniRule"/>
</dbReference>
<dbReference type="FunFam" id="3.30.420.80:FF:000001">
    <property type="entry name" value="30S ribosomal protein S11"/>
    <property type="match status" value="1"/>
</dbReference>
<dbReference type="Gene3D" id="3.30.420.80">
    <property type="entry name" value="Ribosomal protein S11"/>
    <property type="match status" value="1"/>
</dbReference>
<dbReference type="HAMAP" id="MF_01310">
    <property type="entry name" value="Ribosomal_uS11"/>
    <property type="match status" value="1"/>
</dbReference>
<dbReference type="InterPro" id="IPR001971">
    <property type="entry name" value="Ribosomal_uS11"/>
</dbReference>
<dbReference type="InterPro" id="IPR019981">
    <property type="entry name" value="Ribosomal_uS11_bac-type"/>
</dbReference>
<dbReference type="InterPro" id="IPR018102">
    <property type="entry name" value="Ribosomal_uS11_CS"/>
</dbReference>
<dbReference type="InterPro" id="IPR036967">
    <property type="entry name" value="Ribosomal_uS11_sf"/>
</dbReference>
<dbReference type="NCBIfam" id="NF003698">
    <property type="entry name" value="PRK05309.1"/>
    <property type="match status" value="1"/>
</dbReference>
<dbReference type="NCBIfam" id="TIGR03632">
    <property type="entry name" value="uS11_bact"/>
    <property type="match status" value="1"/>
</dbReference>
<dbReference type="PANTHER" id="PTHR11759">
    <property type="entry name" value="40S RIBOSOMAL PROTEIN S14/30S RIBOSOMAL PROTEIN S11"/>
    <property type="match status" value="1"/>
</dbReference>
<dbReference type="Pfam" id="PF00411">
    <property type="entry name" value="Ribosomal_S11"/>
    <property type="match status" value="1"/>
</dbReference>
<dbReference type="PIRSF" id="PIRSF002131">
    <property type="entry name" value="Ribosomal_S11"/>
    <property type="match status" value="1"/>
</dbReference>
<dbReference type="SUPFAM" id="SSF53137">
    <property type="entry name" value="Translational machinery components"/>
    <property type="match status" value="1"/>
</dbReference>
<dbReference type="PROSITE" id="PS00054">
    <property type="entry name" value="RIBOSOMAL_S11"/>
    <property type="match status" value="1"/>
</dbReference>
<organism>
    <name type="scientific">Beijerinckia indica subsp. indica (strain ATCC 9039 / DSM 1715 / NCIMB 8712)</name>
    <dbReference type="NCBI Taxonomy" id="395963"/>
    <lineage>
        <taxon>Bacteria</taxon>
        <taxon>Pseudomonadati</taxon>
        <taxon>Pseudomonadota</taxon>
        <taxon>Alphaproteobacteria</taxon>
        <taxon>Hyphomicrobiales</taxon>
        <taxon>Beijerinckiaceae</taxon>
        <taxon>Beijerinckia</taxon>
    </lineage>
</organism>
<gene>
    <name evidence="1" type="primary">rpsK</name>
    <name type="ordered locus">Bind_2037</name>
</gene>
<name>RS11_BEII9</name>
<feature type="chain" id="PRO_1000141056" description="Small ribosomal subunit protein uS11">
    <location>
        <begin position="1"/>
        <end position="129"/>
    </location>
</feature>
<accession>B2IF94</accession>
<protein>
    <recommendedName>
        <fullName evidence="1">Small ribosomal subunit protein uS11</fullName>
    </recommendedName>
    <alternativeName>
        <fullName evidence="2">30S ribosomal protein S11</fullName>
    </alternativeName>
</protein>